<dbReference type="EMBL" id="AE001437">
    <property type="protein sequence ID" value="AAK81055.1"/>
    <property type="molecule type" value="Genomic_DNA"/>
</dbReference>
<dbReference type="PIR" id="D97283">
    <property type="entry name" value="D97283"/>
</dbReference>
<dbReference type="RefSeq" id="NP_349715.1">
    <property type="nucleotide sequence ID" value="NC_003030.1"/>
</dbReference>
<dbReference type="RefSeq" id="WP_010966395.1">
    <property type="nucleotide sequence ID" value="NC_003030.1"/>
</dbReference>
<dbReference type="SMR" id="Q97EJ5"/>
<dbReference type="STRING" id="272562.CA_C3116"/>
<dbReference type="GeneID" id="44999603"/>
<dbReference type="KEGG" id="cac:CA_C3116"/>
<dbReference type="PATRIC" id="fig|272562.8.peg.3299"/>
<dbReference type="eggNOG" id="COG0098">
    <property type="taxonomic scope" value="Bacteria"/>
</dbReference>
<dbReference type="HOGENOM" id="CLU_065898_2_2_9"/>
<dbReference type="OrthoDB" id="9809045at2"/>
<dbReference type="Proteomes" id="UP000000814">
    <property type="component" value="Chromosome"/>
</dbReference>
<dbReference type="GO" id="GO:0015935">
    <property type="term" value="C:small ribosomal subunit"/>
    <property type="evidence" value="ECO:0007669"/>
    <property type="project" value="InterPro"/>
</dbReference>
<dbReference type="GO" id="GO:0019843">
    <property type="term" value="F:rRNA binding"/>
    <property type="evidence" value="ECO:0007669"/>
    <property type="project" value="UniProtKB-UniRule"/>
</dbReference>
<dbReference type="GO" id="GO:0003735">
    <property type="term" value="F:structural constituent of ribosome"/>
    <property type="evidence" value="ECO:0007669"/>
    <property type="project" value="InterPro"/>
</dbReference>
<dbReference type="GO" id="GO:0006412">
    <property type="term" value="P:translation"/>
    <property type="evidence" value="ECO:0007669"/>
    <property type="project" value="UniProtKB-UniRule"/>
</dbReference>
<dbReference type="FunFam" id="3.30.160.20:FF:000001">
    <property type="entry name" value="30S ribosomal protein S5"/>
    <property type="match status" value="1"/>
</dbReference>
<dbReference type="FunFam" id="3.30.230.10:FF:000002">
    <property type="entry name" value="30S ribosomal protein S5"/>
    <property type="match status" value="1"/>
</dbReference>
<dbReference type="Gene3D" id="3.30.160.20">
    <property type="match status" value="1"/>
</dbReference>
<dbReference type="Gene3D" id="3.30.230.10">
    <property type="match status" value="1"/>
</dbReference>
<dbReference type="HAMAP" id="MF_01307_B">
    <property type="entry name" value="Ribosomal_uS5_B"/>
    <property type="match status" value="1"/>
</dbReference>
<dbReference type="InterPro" id="IPR020568">
    <property type="entry name" value="Ribosomal_Su5_D2-typ_SF"/>
</dbReference>
<dbReference type="InterPro" id="IPR000851">
    <property type="entry name" value="Ribosomal_uS5"/>
</dbReference>
<dbReference type="InterPro" id="IPR005712">
    <property type="entry name" value="Ribosomal_uS5_bac-type"/>
</dbReference>
<dbReference type="InterPro" id="IPR005324">
    <property type="entry name" value="Ribosomal_uS5_C"/>
</dbReference>
<dbReference type="InterPro" id="IPR013810">
    <property type="entry name" value="Ribosomal_uS5_N"/>
</dbReference>
<dbReference type="InterPro" id="IPR018192">
    <property type="entry name" value="Ribosomal_uS5_N_CS"/>
</dbReference>
<dbReference type="InterPro" id="IPR014721">
    <property type="entry name" value="Ribsml_uS5_D2-typ_fold_subgr"/>
</dbReference>
<dbReference type="NCBIfam" id="TIGR01021">
    <property type="entry name" value="rpsE_bact"/>
    <property type="match status" value="1"/>
</dbReference>
<dbReference type="PANTHER" id="PTHR48277">
    <property type="entry name" value="MITOCHONDRIAL RIBOSOMAL PROTEIN S5"/>
    <property type="match status" value="1"/>
</dbReference>
<dbReference type="PANTHER" id="PTHR48277:SF1">
    <property type="entry name" value="MITOCHONDRIAL RIBOSOMAL PROTEIN S5"/>
    <property type="match status" value="1"/>
</dbReference>
<dbReference type="Pfam" id="PF00333">
    <property type="entry name" value="Ribosomal_S5"/>
    <property type="match status" value="1"/>
</dbReference>
<dbReference type="Pfam" id="PF03719">
    <property type="entry name" value="Ribosomal_S5_C"/>
    <property type="match status" value="1"/>
</dbReference>
<dbReference type="SUPFAM" id="SSF54768">
    <property type="entry name" value="dsRNA-binding domain-like"/>
    <property type="match status" value="1"/>
</dbReference>
<dbReference type="SUPFAM" id="SSF54211">
    <property type="entry name" value="Ribosomal protein S5 domain 2-like"/>
    <property type="match status" value="1"/>
</dbReference>
<dbReference type="PROSITE" id="PS00585">
    <property type="entry name" value="RIBOSOMAL_S5"/>
    <property type="match status" value="1"/>
</dbReference>
<dbReference type="PROSITE" id="PS50881">
    <property type="entry name" value="S5_DSRBD"/>
    <property type="match status" value="1"/>
</dbReference>
<comment type="function">
    <text evidence="1">With S4 and S12 plays an important role in translational accuracy.</text>
</comment>
<comment type="function">
    <text evidence="1">Located at the back of the 30S subunit body where it stabilizes the conformation of the head with respect to the body.</text>
</comment>
<comment type="subunit">
    <text evidence="1">Part of the 30S ribosomal subunit. Contacts proteins S4 and S8.</text>
</comment>
<comment type="domain">
    <text>The N-terminal domain interacts with the head of the 30S subunit; the C-terminal domain interacts with the body and contacts protein S4. The interaction surface between S4 and S5 is involved in control of translational fidelity.</text>
</comment>
<comment type="similarity">
    <text evidence="1">Belongs to the universal ribosomal protein uS5 family.</text>
</comment>
<protein>
    <recommendedName>
        <fullName evidence="1">Small ribosomal subunit protein uS5</fullName>
    </recommendedName>
    <alternativeName>
        <fullName evidence="2">30S ribosomal protein S5</fullName>
    </alternativeName>
</protein>
<accession>Q97EJ5</accession>
<feature type="chain" id="PRO_0000131502" description="Small ribosomal subunit protein uS5">
    <location>
        <begin position="1"/>
        <end position="165"/>
    </location>
</feature>
<feature type="domain" description="S5 DRBM" evidence="1">
    <location>
        <begin position="10"/>
        <end position="73"/>
    </location>
</feature>
<keyword id="KW-1185">Reference proteome</keyword>
<keyword id="KW-0687">Ribonucleoprotein</keyword>
<keyword id="KW-0689">Ribosomal protein</keyword>
<keyword id="KW-0694">RNA-binding</keyword>
<keyword id="KW-0699">rRNA-binding</keyword>
<sequence>MRIDPSTLDLKEKVVFINRVAKVVKGGRNFRFTALVVVGDENGHVGVGTGKSAEIPEAIRKGIEDAKKNLVEVAIVGTTVPHEIYGEFGTGRVLIMPASEGTGVIAGGPVRAVLELAGLNDVRAKSLGSNNPRNMVNATINGLSRLRTVEQIAALRGKTVEEILG</sequence>
<reference key="1">
    <citation type="journal article" date="2001" name="J. Bacteriol.">
        <title>Genome sequence and comparative analysis of the solvent-producing bacterium Clostridium acetobutylicum.</title>
        <authorList>
            <person name="Noelling J."/>
            <person name="Breton G."/>
            <person name="Omelchenko M.V."/>
            <person name="Makarova K.S."/>
            <person name="Zeng Q."/>
            <person name="Gibson R."/>
            <person name="Lee H.M."/>
            <person name="Dubois J."/>
            <person name="Qiu D."/>
            <person name="Hitti J."/>
            <person name="Wolf Y.I."/>
            <person name="Tatusov R.L."/>
            <person name="Sabathe F."/>
            <person name="Doucette-Stamm L.A."/>
            <person name="Soucaille P."/>
            <person name="Daly M.J."/>
            <person name="Bennett G.N."/>
            <person name="Koonin E.V."/>
            <person name="Smith D.R."/>
        </authorList>
    </citation>
    <scope>NUCLEOTIDE SEQUENCE [LARGE SCALE GENOMIC DNA]</scope>
    <source>
        <strain>ATCC 824 / DSM 792 / JCM 1419 / IAM 19013 / LMG 5710 / NBRC 13948 / NRRL B-527 / VKM B-1787 / 2291 / W</strain>
    </source>
</reference>
<name>RS5_CLOAB</name>
<organism>
    <name type="scientific">Clostridium acetobutylicum (strain ATCC 824 / DSM 792 / JCM 1419 / IAM 19013 / LMG 5710 / NBRC 13948 / NRRL B-527 / VKM B-1787 / 2291 / W)</name>
    <dbReference type="NCBI Taxonomy" id="272562"/>
    <lineage>
        <taxon>Bacteria</taxon>
        <taxon>Bacillati</taxon>
        <taxon>Bacillota</taxon>
        <taxon>Clostridia</taxon>
        <taxon>Eubacteriales</taxon>
        <taxon>Clostridiaceae</taxon>
        <taxon>Clostridium</taxon>
    </lineage>
</organism>
<proteinExistence type="inferred from homology"/>
<evidence type="ECO:0000255" key="1">
    <source>
        <dbReference type="HAMAP-Rule" id="MF_01307"/>
    </source>
</evidence>
<evidence type="ECO:0000305" key="2"/>
<gene>
    <name evidence="1" type="primary">rpsE</name>
    <name type="ordered locus">CA_C3116</name>
</gene>